<proteinExistence type="inferred from homology"/>
<reference key="1">
    <citation type="submission" date="2007-06" db="EMBL/GenBank/DDBJ databases">
        <title>Complete sequence of Marinomonas sp. MWYL1.</title>
        <authorList>
            <consortium name="US DOE Joint Genome Institute"/>
            <person name="Copeland A."/>
            <person name="Lucas S."/>
            <person name="Lapidus A."/>
            <person name="Barry K."/>
            <person name="Glavina del Rio T."/>
            <person name="Dalin E."/>
            <person name="Tice H."/>
            <person name="Pitluck S."/>
            <person name="Kiss H."/>
            <person name="Brettin T."/>
            <person name="Bruce D."/>
            <person name="Detter J.C."/>
            <person name="Han C."/>
            <person name="Schmutz J."/>
            <person name="Larimer F."/>
            <person name="Land M."/>
            <person name="Hauser L."/>
            <person name="Kyrpides N."/>
            <person name="Kim E."/>
            <person name="Johnston A.W.B."/>
            <person name="Todd J.D."/>
            <person name="Rogers R."/>
            <person name="Wexler M."/>
            <person name="Bond P.L."/>
            <person name="Li Y."/>
            <person name="Richardson P."/>
        </authorList>
    </citation>
    <scope>NUCLEOTIDE SEQUENCE [LARGE SCALE GENOMIC DNA]</scope>
    <source>
        <strain>MWYL1</strain>
    </source>
</reference>
<name>RSMA_MARMS</name>
<feature type="chain" id="PRO_1000082555" description="Ribosomal RNA small subunit methyltransferase A">
    <location>
        <begin position="1"/>
        <end position="266"/>
    </location>
</feature>
<feature type="binding site" evidence="1">
    <location>
        <position position="16"/>
    </location>
    <ligand>
        <name>S-adenosyl-L-methionine</name>
        <dbReference type="ChEBI" id="CHEBI:59789"/>
    </ligand>
</feature>
<feature type="binding site" evidence="1">
    <location>
        <position position="18"/>
    </location>
    <ligand>
        <name>S-adenosyl-L-methionine</name>
        <dbReference type="ChEBI" id="CHEBI:59789"/>
    </ligand>
</feature>
<feature type="binding site" evidence="1">
    <location>
        <position position="43"/>
    </location>
    <ligand>
        <name>S-adenosyl-L-methionine</name>
        <dbReference type="ChEBI" id="CHEBI:59789"/>
    </ligand>
</feature>
<feature type="binding site" evidence="1">
    <location>
        <position position="64"/>
    </location>
    <ligand>
        <name>S-adenosyl-L-methionine</name>
        <dbReference type="ChEBI" id="CHEBI:59789"/>
    </ligand>
</feature>
<feature type="binding site" evidence="1">
    <location>
        <position position="89"/>
    </location>
    <ligand>
        <name>S-adenosyl-L-methionine</name>
        <dbReference type="ChEBI" id="CHEBI:59789"/>
    </ligand>
</feature>
<feature type="binding site" evidence="1">
    <location>
        <position position="110"/>
    </location>
    <ligand>
        <name>S-adenosyl-L-methionine</name>
        <dbReference type="ChEBI" id="CHEBI:59789"/>
    </ligand>
</feature>
<evidence type="ECO:0000255" key="1">
    <source>
        <dbReference type="HAMAP-Rule" id="MF_00607"/>
    </source>
</evidence>
<comment type="function">
    <text evidence="1">Specifically dimethylates two adjacent adenosines (A1518 and A1519) in the loop of a conserved hairpin near the 3'-end of 16S rRNA in the 30S particle. May play a critical role in biogenesis of 30S subunits.</text>
</comment>
<comment type="catalytic activity">
    <reaction evidence="1">
        <text>adenosine(1518)/adenosine(1519) in 16S rRNA + 4 S-adenosyl-L-methionine = N(6)-dimethyladenosine(1518)/N(6)-dimethyladenosine(1519) in 16S rRNA + 4 S-adenosyl-L-homocysteine + 4 H(+)</text>
        <dbReference type="Rhea" id="RHEA:19609"/>
        <dbReference type="Rhea" id="RHEA-COMP:10232"/>
        <dbReference type="Rhea" id="RHEA-COMP:10233"/>
        <dbReference type="ChEBI" id="CHEBI:15378"/>
        <dbReference type="ChEBI" id="CHEBI:57856"/>
        <dbReference type="ChEBI" id="CHEBI:59789"/>
        <dbReference type="ChEBI" id="CHEBI:74411"/>
        <dbReference type="ChEBI" id="CHEBI:74493"/>
        <dbReference type="EC" id="2.1.1.182"/>
    </reaction>
</comment>
<comment type="subcellular location">
    <subcellularLocation>
        <location evidence="1">Cytoplasm</location>
    </subcellularLocation>
</comment>
<comment type="similarity">
    <text evidence="1">Belongs to the class I-like SAM-binding methyltransferase superfamily. rRNA adenine N(6)-methyltransferase family. RsmA subfamily.</text>
</comment>
<accession>A6VU53</accession>
<keyword id="KW-0963">Cytoplasm</keyword>
<keyword id="KW-0489">Methyltransferase</keyword>
<keyword id="KW-0694">RNA-binding</keyword>
<keyword id="KW-0698">rRNA processing</keyword>
<keyword id="KW-0949">S-adenosyl-L-methionine</keyword>
<keyword id="KW-0808">Transferase</keyword>
<protein>
    <recommendedName>
        <fullName evidence="1">Ribosomal RNA small subunit methyltransferase A</fullName>
        <ecNumber evidence="1">2.1.1.182</ecNumber>
    </recommendedName>
    <alternativeName>
        <fullName evidence="1">16S rRNA (adenine(1518)-N(6)/adenine(1519)-N(6))-dimethyltransferase</fullName>
    </alternativeName>
    <alternativeName>
        <fullName evidence="1">16S rRNA dimethyladenosine transferase</fullName>
    </alternativeName>
    <alternativeName>
        <fullName evidence="1">16S rRNA dimethylase</fullName>
    </alternativeName>
    <alternativeName>
        <fullName evidence="1">S-adenosylmethionine-6-N', N'-adenosyl(rRNA) dimethyltransferase</fullName>
    </alternativeName>
</protein>
<sequence>MSKSQPHKARKRFGQNFLHDHGVIRRIVACIGPKKGQRIVEIGPGKGALTEGIISVTERMDVVELDRDLIPILKVNLFRFPELTVHEADAMKFDFTSLTTPEQAIRVVGNLPYNISTPLIFHLLSQAQAIEDMHFMLQKEVVDRLAARPGDSLYGRLSVMAQYYCAVESLFIVGPESFDPAPKVDSAIVRMTPHKILPHPVNNIKMLEDMVRIGFQQRRKTLRNNYKGVLDNDDFSALNIDPTLRPERLDVEDFVRIANYVIKKEG</sequence>
<organism>
    <name type="scientific">Marinomonas sp. (strain MWYL1)</name>
    <dbReference type="NCBI Taxonomy" id="400668"/>
    <lineage>
        <taxon>Bacteria</taxon>
        <taxon>Pseudomonadati</taxon>
        <taxon>Pseudomonadota</taxon>
        <taxon>Gammaproteobacteria</taxon>
        <taxon>Oceanospirillales</taxon>
        <taxon>Oceanospirillaceae</taxon>
        <taxon>Marinomonas</taxon>
    </lineage>
</organism>
<gene>
    <name evidence="1" type="primary">rsmA</name>
    <name evidence="1" type="synonym">ksgA</name>
    <name type="ordered locus">Mmwyl1_1051</name>
</gene>
<dbReference type="EC" id="2.1.1.182" evidence="1"/>
<dbReference type="EMBL" id="CP000749">
    <property type="protein sequence ID" value="ABR69982.1"/>
    <property type="molecule type" value="Genomic_DNA"/>
</dbReference>
<dbReference type="SMR" id="A6VU53"/>
<dbReference type="STRING" id="400668.Mmwyl1_1051"/>
<dbReference type="KEGG" id="mmw:Mmwyl1_1051"/>
<dbReference type="eggNOG" id="COG0030">
    <property type="taxonomic scope" value="Bacteria"/>
</dbReference>
<dbReference type="HOGENOM" id="CLU_041220_0_1_6"/>
<dbReference type="OrthoDB" id="9814755at2"/>
<dbReference type="GO" id="GO:0005829">
    <property type="term" value="C:cytosol"/>
    <property type="evidence" value="ECO:0007669"/>
    <property type="project" value="TreeGrafter"/>
</dbReference>
<dbReference type="GO" id="GO:0052908">
    <property type="term" value="F:16S rRNA (adenine(1518)-N(6)/adenine(1519)-N(6))-dimethyltransferase activity"/>
    <property type="evidence" value="ECO:0007669"/>
    <property type="project" value="UniProtKB-EC"/>
</dbReference>
<dbReference type="GO" id="GO:0003723">
    <property type="term" value="F:RNA binding"/>
    <property type="evidence" value="ECO:0007669"/>
    <property type="project" value="UniProtKB-KW"/>
</dbReference>
<dbReference type="CDD" id="cd02440">
    <property type="entry name" value="AdoMet_MTases"/>
    <property type="match status" value="1"/>
</dbReference>
<dbReference type="FunFam" id="1.10.8.100:FF:000001">
    <property type="entry name" value="Ribosomal RNA small subunit methyltransferase A"/>
    <property type="match status" value="1"/>
</dbReference>
<dbReference type="Gene3D" id="1.10.8.100">
    <property type="entry name" value="Ribosomal RNA adenine dimethylase-like, domain 2"/>
    <property type="match status" value="1"/>
</dbReference>
<dbReference type="Gene3D" id="3.40.50.150">
    <property type="entry name" value="Vaccinia Virus protein VP39"/>
    <property type="match status" value="1"/>
</dbReference>
<dbReference type="HAMAP" id="MF_00607">
    <property type="entry name" value="16SrRNA_methyltr_A"/>
    <property type="match status" value="1"/>
</dbReference>
<dbReference type="InterPro" id="IPR001737">
    <property type="entry name" value="KsgA/Erm"/>
</dbReference>
<dbReference type="InterPro" id="IPR023165">
    <property type="entry name" value="rRNA_Ade_diMease-like_C"/>
</dbReference>
<dbReference type="InterPro" id="IPR020596">
    <property type="entry name" value="rRNA_Ade_Mease_Trfase_CS"/>
</dbReference>
<dbReference type="InterPro" id="IPR020598">
    <property type="entry name" value="rRNA_Ade_methylase_Trfase_N"/>
</dbReference>
<dbReference type="InterPro" id="IPR011530">
    <property type="entry name" value="rRNA_adenine_dimethylase"/>
</dbReference>
<dbReference type="InterPro" id="IPR029063">
    <property type="entry name" value="SAM-dependent_MTases_sf"/>
</dbReference>
<dbReference type="NCBIfam" id="TIGR00755">
    <property type="entry name" value="ksgA"/>
    <property type="match status" value="1"/>
</dbReference>
<dbReference type="PANTHER" id="PTHR11727">
    <property type="entry name" value="DIMETHYLADENOSINE TRANSFERASE"/>
    <property type="match status" value="1"/>
</dbReference>
<dbReference type="PANTHER" id="PTHR11727:SF7">
    <property type="entry name" value="DIMETHYLADENOSINE TRANSFERASE-RELATED"/>
    <property type="match status" value="1"/>
</dbReference>
<dbReference type="Pfam" id="PF00398">
    <property type="entry name" value="RrnaAD"/>
    <property type="match status" value="1"/>
</dbReference>
<dbReference type="SMART" id="SM00650">
    <property type="entry name" value="rADc"/>
    <property type="match status" value="1"/>
</dbReference>
<dbReference type="SUPFAM" id="SSF53335">
    <property type="entry name" value="S-adenosyl-L-methionine-dependent methyltransferases"/>
    <property type="match status" value="1"/>
</dbReference>
<dbReference type="PROSITE" id="PS01131">
    <property type="entry name" value="RRNA_A_DIMETH"/>
    <property type="match status" value="1"/>
</dbReference>
<dbReference type="PROSITE" id="PS51689">
    <property type="entry name" value="SAM_RNA_A_N6_MT"/>
    <property type="match status" value="1"/>
</dbReference>